<sequence length="451" mass="50441">MREIVHIQIGQCGNQIGAKFWEVIGEEHGIDCAGSYCGTSALQLERISVYYNEAYGKKYVPRAVLVDLEPGTMDSIRSSRLGVLFQPDSFVHGNSGAGNNWAKGHYTEGAELIENVMDVVRRESESCDCLQGFQIVHSLGGGTGSGMGTLLMNKIREEYPDRILNSFSVMPSPKVSDTVVEPYNAVLSIHQLIENTDACFCIDNEALYDICFRTLRLTTPTYGDLNHLVSLTMSGITTSLRFPGQLNADLRKLAVNMVPFPRLHFFMPGFAPLTAQGSQQYRALSVAELTQQMFDARNIMAACDPRRGRYLTVACIFRGKMSTKEVDQQLLSIQTRNSNCFVEWIPNNVKVAVCDIPPRGLNMAATFLGNNTAIQELFTRVSEHFSAMFRRRAFVHWYTSEGMDISEFGEAESDIHDLVSEYQQFQDVRAGLEDSEEDVEEAEVEAEDKDH</sequence>
<organism>
    <name type="scientific">Mus musculus</name>
    <name type="common">Mouse</name>
    <dbReference type="NCBI Taxonomy" id="10090"/>
    <lineage>
        <taxon>Eukaryota</taxon>
        <taxon>Metazoa</taxon>
        <taxon>Chordata</taxon>
        <taxon>Craniata</taxon>
        <taxon>Vertebrata</taxon>
        <taxon>Euteleostomi</taxon>
        <taxon>Mammalia</taxon>
        <taxon>Eutheria</taxon>
        <taxon>Euarchontoglires</taxon>
        <taxon>Glires</taxon>
        <taxon>Rodentia</taxon>
        <taxon>Myomorpha</taxon>
        <taxon>Muroidea</taxon>
        <taxon>Muridae</taxon>
        <taxon>Murinae</taxon>
        <taxon>Mus</taxon>
        <taxon>Mus</taxon>
    </lineage>
</organism>
<gene>
    <name type="primary">Tubb1</name>
</gene>
<dbReference type="EMBL" id="AL844534">
    <property type="status" value="NOT_ANNOTATED_CDS"/>
    <property type="molecule type" value="Genomic_DNA"/>
</dbReference>
<dbReference type="EMBL" id="CH466551">
    <property type="protein sequence ID" value="EDL06679.1"/>
    <property type="molecule type" value="Genomic_DNA"/>
</dbReference>
<dbReference type="EMBL" id="BC147322">
    <property type="protein sequence ID" value="AAI47323.1"/>
    <property type="molecule type" value="mRNA"/>
</dbReference>
<dbReference type="EMBL" id="BC147323">
    <property type="protein sequence ID" value="AAI47324.1"/>
    <property type="molecule type" value="mRNA"/>
</dbReference>
<dbReference type="EMBL" id="BC147687">
    <property type="protein sequence ID" value="AAI47688.1"/>
    <property type="molecule type" value="mRNA"/>
</dbReference>
<dbReference type="EMBL" id="BC147698">
    <property type="protein sequence ID" value="AAI47699.1"/>
    <property type="molecule type" value="mRNA"/>
</dbReference>
<dbReference type="CCDS" id="CCDS38359.1"/>
<dbReference type="RefSeq" id="NP_001074440.1">
    <property type="nucleotide sequence ID" value="NM_001080971.2"/>
</dbReference>
<dbReference type="SMR" id="A2AQ07"/>
<dbReference type="BioGRID" id="244340">
    <property type="interactions" value="9"/>
</dbReference>
<dbReference type="CORUM" id="A2AQ07"/>
<dbReference type="FunCoup" id="A2AQ07">
    <property type="interactions" value="184"/>
</dbReference>
<dbReference type="STRING" id="10090.ENSMUSP00000016399"/>
<dbReference type="iPTMnet" id="A2AQ07"/>
<dbReference type="PhosphoSitePlus" id="A2AQ07"/>
<dbReference type="jPOST" id="A2AQ07"/>
<dbReference type="PaxDb" id="10090-ENSMUSP00000016399"/>
<dbReference type="PeptideAtlas" id="A2AQ07"/>
<dbReference type="ProteomicsDB" id="254820"/>
<dbReference type="Antibodypedia" id="3801">
    <property type="antibodies" value="498 antibodies from 35 providers"/>
</dbReference>
<dbReference type="Ensembl" id="ENSMUST00000016399.6">
    <property type="protein sequence ID" value="ENSMUSP00000016399.6"/>
    <property type="gene ID" value="ENSMUSG00000016255.6"/>
</dbReference>
<dbReference type="GeneID" id="545486"/>
<dbReference type="KEGG" id="mmu:545486"/>
<dbReference type="UCSC" id="uc008ofe.2">
    <property type="organism name" value="mouse"/>
</dbReference>
<dbReference type="AGR" id="MGI:107814"/>
<dbReference type="CTD" id="81027"/>
<dbReference type="MGI" id="MGI:107814">
    <property type="gene designation" value="Tubb1"/>
</dbReference>
<dbReference type="VEuPathDB" id="HostDB:ENSMUSG00000016255"/>
<dbReference type="eggNOG" id="KOG1375">
    <property type="taxonomic scope" value="Eukaryota"/>
</dbReference>
<dbReference type="GeneTree" id="ENSGT00940000159809"/>
<dbReference type="HOGENOM" id="CLU_015718_1_1_1"/>
<dbReference type="InParanoid" id="A2AQ07"/>
<dbReference type="OMA" id="NTDACFC"/>
<dbReference type="OrthoDB" id="1662883at2759"/>
<dbReference type="PhylomeDB" id="A2AQ07"/>
<dbReference type="TreeFam" id="TF300298"/>
<dbReference type="Reactome" id="R-MMU-190840">
    <property type="pathway name" value="Microtubule-dependent trafficking of connexons from Golgi to the plasma membrane"/>
</dbReference>
<dbReference type="Reactome" id="R-MMU-2132295">
    <property type="pathway name" value="MHC class II antigen presentation"/>
</dbReference>
<dbReference type="Reactome" id="R-MMU-2467813">
    <property type="pathway name" value="Separation of Sister Chromatids"/>
</dbReference>
<dbReference type="Reactome" id="R-MMU-2500257">
    <property type="pathway name" value="Resolution of Sister Chromatid Cohesion"/>
</dbReference>
<dbReference type="Reactome" id="R-MMU-3371497">
    <property type="pathway name" value="HSP90 chaperone cycle for steroid hormone receptors (SHR) in the presence of ligand"/>
</dbReference>
<dbReference type="Reactome" id="R-MMU-380320">
    <property type="pathway name" value="Recruitment of NuMA to mitotic centrosomes"/>
</dbReference>
<dbReference type="Reactome" id="R-MMU-437239">
    <property type="pathway name" value="Recycling pathway of L1"/>
</dbReference>
<dbReference type="Reactome" id="R-MMU-5610787">
    <property type="pathway name" value="Hedgehog 'off' state"/>
</dbReference>
<dbReference type="Reactome" id="R-MMU-5617833">
    <property type="pathway name" value="Cilium Assembly"/>
</dbReference>
<dbReference type="Reactome" id="R-MMU-5620924">
    <property type="pathway name" value="Intraflagellar transport"/>
</dbReference>
<dbReference type="Reactome" id="R-MMU-5626467">
    <property type="pathway name" value="RHO GTPases activate IQGAPs"/>
</dbReference>
<dbReference type="Reactome" id="R-MMU-5663220">
    <property type="pathway name" value="RHO GTPases Activate Formins"/>
</dbReference>
<dbReference type="Reactome" id="R-MMU-6807878">
    <property type="pathway name" value="COPI-mediated anterograde transport"/>
</dbReference>
<dbReference type="Reactome" id="R-MMU-6811434">
    <property type="pathway name" value="COPI-dependent Golgi-to-ER retrograde traffic"/>
</dbReference>
<dbReference type="Reactome" id="R-MMU-6811436">
    <property type="pathway name" value="COPI-independent Golgi-to-ER retrograde traffic"/>
</dbReference>
<dbReference type="Reactome" id="R-MMU-68877">
    <property type="pathway name" value="Mitotic Prometaphase"/>
</dbReference>
<dbReference type="Reactome" id="R-MMU-8852276">
    <property type="pathway name" value="The role of GTSE1 in G2/M progression after G2 checkpoint"/>
</dbReference>
<dbReference type="Reactome" id="R-MMU-8955332">
    <property type="pathway name" value="Carboxyterminal post-translational modifications of tubulin"/>
</dbReference>
<dbReference type="Reactome" id="R-MMU-9646399">
    <property type="pathway name" value="Aggrephagy"/>
</dbReference>
<dbReference type="Reactome" id="R-MMU-9648025">
    <property type="pathway name" value="EML4 and NUDC in mitotic spindle formation"/>
</dbReference>
<dbReference type="Reactome" id="R-MMU-9668328">
    <property type="pathway name" value="Sealing of the nuclear envelope (NE) by ESCRT-III"/>
</dbReference>
<dbReference type="Reactome" id="R-MMU-983189">
    <property type="pathway name" value="Kinesins"/>
</dbReference>
<dbReference type="Reactome" id="R-MMU-9833482">
    <property type="pathway name" value="PKR-mediated signaling"/>
</dbReference>
<dbReference type="BioGRID-ORCS" id="545486">
    <property type="hits" value="1 hit in 77 CRISPR screens"/>
</dbReference>
<dbReference type="PRO" id="PR:A2AQ07"/>
<dbReference type="Proteomes" id="UP000000589">
    <property type="component" value="Chromosome 2"/>
</dbReference>
<dbReference type="RNAct" id="A2AQ07">
    <property type="molecule type" value="protein"/>
</dbReference>
<dbReference type="Bgee" id="ENSMUSG00000016255">
    <property type="expression patterns" value="Expressed in blood and 51 other cell types or tissues"/>
</dbReference>
<dbReference type="GO" id="GO:0005737">
    <property type="term" value="C:cytoplasm"/>
    <property type="evidence" value="ECO:0007669"/>
    <property type="project" value="UniProtKB-KW"/>
</dbReference>
<dbReference type="GO" id="GO:0045171">
    <property type="term" value="C:intercellular bridge"/>
    <property type="evidence" value="ECO:0007669"/>
    <property type="project" value="Ensembl"/>
</dbReference>
<dbReference type="GO" id="GO:0005874">
    <property type="term" value="C:microtubule"/>
    <property type="evidence" value="ECO:0000314"/>
    <property type="project" value="MGI"/>
</dbReference>
<dbReference type="GO" id="GO:0072686">
    <property type="term" value="C:mitotic spindle"/>
    <property type="evidence" value="ECO:0007669"/>
    <property type="project" value="Ensembl"/>
</dbReference>
<dbReference type="GO" id="GO:0005525">
    <property type="term" value="F:GTP binding"/>
    <property type="evidence" value="ECO:0007669"/>
    <property type="project" value="UniProtKB-KW"/>
</dbReference>
<dbReference type="GO" id="GO:0003924">
    <property type="term" value="F:GTPase activity"/>
    <property type="evidence" value="ECO:0007669"/>
    <property type="project" value="InterPro"/>
</dbReference>
<dbReference type="GO" id="GO:0046872">
    <property type="term" value="F:metal ion binding"/>
    <property type="evidence" value="ECO:0007669"/>
    <property type="project" value="UniProtKB-KW"/>
</dbReference>
<dbReference type="GO" id="GO:0005200">
    <property type="term" value="F:structural constituent of cytoskeleton"/>
    <property type="evidence" value="ECO:0000314"/>
    <property type="project" value="MGI"/>
</dbReference>
<dbReference type="GO" id="GO:0046785">
    <property type="term" value="P:microtubule polymerization"/>
    <property type="evidence" value="ECO:0000315"/>
    <property type="project" value="MGI"/>
</dbReference>
<dbReference type="GO" id="GO:0007017">
    <property type="term" value="P:microtubule-based process"/>
    <property type="evidence" value="ECO:0000314"/>
    <property type="project" value="MGI"/>
</dbReference>
<dbReference type="GO" id="GO:0070527">
    <property type="term" value="P:platelet aggregation"/>
    <property type="evidence" value="ECO:0000315"/>
    <property type="project" value="MGI"/>
</dbReference>
<dbReference type="GO" id="GO:0030220">
    <property type="term" value="P:platelet formation"/>
    <property type="evidence" value="ECO:0000315"/>
    <property type="project" value="MGI"/>
</dbReference>
<dbReference type="GO" id="GO:0051225">
    <property type="term" value="P:spindle assembly"/>
    <property type="evidence" value="ECO:0000314"/>
    <property type="project" value="MGI"/>
</dbReference>
<dbReference type="GO" id="GO:0030878">
    <property type="term" value="P:thyroid gland development"/>
    <property type="evidence" value="ECO:0000315"/>
    <property type="project" value="MGI"/>
</dbReference>
<dbReference type="GO" id="GO:0070327">
    <property type="term" value="P:thyroid hormone transport"/>
    <property type="evidence" value="ECO:0000315"/>
    <property type="project" value="MGI"/>
</dbReference>
<dbReference type="CDD" id="cd02187">
    <property type="entry name" value="beta_tubulin"/>
    <property type="match status" value="1"/>
</dbReference>
<dbReference type="FunFam" id="1.10.287.600:FF:000008">
    <property type="entry name" value="Tubulin beta chain"/>
    <property type="match status" value="1"/>
</dbReference>
<dbReference type="FunFam" id="3.30.1330.20:FF:000002">
    <property type="entry name" value="Tubulin beta chain"/>
    <property type="match status" value="1"/>
</dbReference>
<dbReference type="FunFam" id="3.40.50.1440:FF:000006">
    <property type="entry name" value="Tubulin beta chain"/>
    <property type="match status" value="1"/>
</dbReference>
<dbReference type="Gene3D" id="1.10.287.600">
    <property type="entry name" value="Helix hairpin bin"/>
    <property type="match status" value="1"/>
</dbReference>
<dbReference type="Gene3D" id="3.30.1330.20">
    <property type="entry name" value="Tubulin/FtsZ, C-terminal domain"/>
    <property type="match status" value="1"/>
</dbReference>
<dbReference type="Gene3D" id="3.40.50.1440">
    <property type="entry name" value="Tubulin/FtsZ, GTPase domain"/>
    <property type="match status" value="1"/>
</dbReference>
<dbReference type="InterPro" id="IPR013838">
    <property type="entry name" value="Beta-tubulin_BS"/>
</dbReference>
<dbReference type="InterPro" id="IPR002453">
    <property type="entry name" value="Beta_tubulin"/>
</dbReference>
<dbReference type="InterPro" id="IPR008280">
    <property type="entry name" value="Tub_FtsZ_C"/>
</dbReference>
<dbReference type="InterPro" id="IPR000217">
    <property type="entry name" value="Tubulin"/>
</dbReference>
<dbReference type="InterPro" id="IPR037103">
    <property type="entry name" value="Tubulin/FtsZ-like_C"/>
</dbReference>
<dbReference type="InterPro" id="IPR018316">
    <property type="entry name" value="Tubulin/FtsZ_2-layer-sand-dom"/>
</dbReference>
<dbReference type="InterPro" id="IPR036525">
    <property type="entry name" value="Tubulin/FtsZ_GTPase_sf"/>
</dbReference>
<dbReference type="InterPro" id="IPR023123">
    <property type="entry name" value="Tubulin_C"/>
</dbReference>
<dbReference type="InterPro" id="IPR017975">
    <property type="entry name" value="Tubulin_CS"/>
</dbReference>
<dbReference type="InterPro" id="IPR003008">
    <property type="entry name" value="Tubulin_FtsZ_GTPase"/>
</dbReference>
<dbReference type="PANTHER" id="PTHR11588">
    <property type="entry name" value="TUBULIN"/>
    <property type="match status" value="1"/>
</dbReference>
<dbReference type="Pfam" id="PF00091">
    <property type="entry name" value="Tubulin"/>
    <property type="match status" value="1"/>
</dbReference>
<dbReference type="Pfam" id="PF03953">
    <property type="entry name" value="Tubulin_C"/>
    <property type="match status" value="1"/>
</dbReference>
<dbReference type="PRINTS" id="PR01163">
    <property type="entry name" value="BETATUBULIN"/>
</dbReference>
<dbReference type="PRINTS" id="PR01161">
    <property type="entry name" value="TUBULIN"/>
</dbReference>
<dbReference type="SMART" id="SM00864">
    <property type="entry name" value="Tubulin"/>
    <property type="match status" value="1"/>
</dbReference>
<dbReference type="SMART" id="SM00865">
    <property type="entry name" value="Tubulin_C"/>
    <property type="match status" value="1"/>
</dbReference>
<dbReference type="SUPFAM" id="SSF55307">
    <property type="entry name" value="Tubulin C-terminal domain-like"/>
    <property type="match status" value="1"/>
</dbReference>
<dbReference type="SUPFAM" id="SSF52490">
    <property type="entry name" value="Tubulin nucleotide-binding domain-like"/>
    <property type="match status" value="1"/>
</dbReference>
<dbReference type="PROSITE" id="PS00227">
    <property type="entry name" value="TUBULIN"/>
    <property type="match status" value="1"/>
</dbReference>
<dbReference type="PROSITE" id="PS00228">
    <property type="entry name" value="TUBULIN_B_AUTOREG"/>
    <property type="match status" value="1"/>
</dbReference>
<comment type="function">
    <text>Tubulin is the major constituent of microtubules, a cylinder consisting of laterally associated linear protofilaments composed of alpha- and beta-tubulin heterodimers. Microtubules grow by the addition of GTP-tubulin dimers to the microtubule end, where a stabilizing cap forms. Below the cap, tubulin dimers are in GDP-bound state, owing to GTPase activity of alpha-tubulin.</text>
</comment>
<comment type="cofactor">
    <cofactor evidence="3">
        <name>Mg(2+)</name>
        <dbReference type="ChEBI" id="CHEBI:18420"/>
    </cofactor>
</comment>
<comment type="subunit">
    <text evidence="10">Dimer of alpha and beta chains. A typical microtubule is a hollow water-filled tube with an outer diameter of 25 nm and an inner diameter of 15 nM. Alpha-beta heterodimers associate head-to-tail to form protofilaments running lengthwise along the microtubule wall with the beta-tubulin subunit facing the microtubule plus end conferring a structural polarity. Microtubules usually have 13 protofilaments but different protofilament numbers can be found in some organisms and specialized cells. Interacts with RANBP10.</text>
</comment>
<comment type="subcellular location">
    <subcellularLocation>
        <location evidence="1">Cytoplasm</location>
        <location evidence="1">Cytoskeleton</location>
    </subcellularLocation>
</comment>
<comment type="domain">
    <text evidence="2">The MREI motif is common among all beta-tubulin isoforms and may be critical for tubulin autoregulation.</text>
</comment>
<comment type="PTM">
    <text evidence="11 12 13">Some glutamate residues at the C-terminus are polyglycylated, resulting in polyglycine chains on the gamma-carboxyl group. Glycylation is mainly limited to tubulin incorporated into axonemes (cilia and flagella) whereas glutamylation is prevalent in neuronal cells, centrioles, axonemes, and the mitotic spindle. Both modifications can coexist on the same protein on adjacent residues, and lowering polyglycylation levels increases polyglutamylation, and reciprocally. Cilia and flagella glycylation is required for their stability and maintenance. Flagella glycylation controls sperm motility (PubMed:33414192).</text>
</comment>
<comment type="PTM">
    <text evidence="6 9 12">Some glutamate residues at the C-terminus are polyglutamylated, resulting in polyglutamate chains on the gamma-carboxyl group (PubMed:15890843). Polyglutamylation plays a key role in microtubule severing by spastin (SPAST). SPAST preferentially recognizes and acts on microtubules decorated with short polyglutamate tails: severing activity by SPAST increases as the number of glutamates per tubulin rises from one to eight, but decreases beyond this glutamylation threshold (By similarity). Glutamylation is also involved in cilia motility (PubMed:23897886).</text>
</comment>
<comment type="PTM">
    <text evidence="7">Phosphorylated on Ser-172 by CDK1 during the cell cycle, from metaphase to telophase, but not in interphase. This phosphorylation inhibits tubulin incorporation into microtubules.</text>
</comment>
<comment type="similarity">
    <text evidence="14">Belongs to the tubulin family.</text>
</comment>
<proteinExistence type="evidence at protein level"/>
<feature type="chain" id="PRO_0000413097" description="Tubulin beta-1 chain">
    <location>
        <begin position="1"/>
        <end position="451"/>
    </location>
</feature>
<feature type="region of interest" description="Disordered" evidence="8">
    <location>
        <begin position="430"/>
        <end position="451"/>
    </location>
</feature>
<feature type="short sequence motif" description="MREI motif" evidence="2">
    <location>
        <begin position="1"/>
        <end position="4"/>
    </location>
</feature>
<feature type="compositionally biased region" description="Acidic residues" evidence="8">
    <location>
        <begin position="433"/>
        <end position="451"/>
    </location>
</feature>
<feature type="binding site" evidence="4">
    <location>
        <position position="11"/>
    </location>
    <ligand>
        <name>GTP</name>
        <dbReference type="ChEBI" id="CHEBI:37565"/>
    </ligand>
</feature>
<feature type="binding site" evidence="3">
    <location>
        <position position="69"/>
    </location>
    <ligand>
        <name>GTP</name>
        <dbReference type="ChEBI" id="CHEBI:37565"/>
    </ligand>
</feature>
<feature type="binding site" evidence="3">
    <location>
        <position position="69"/>
    </location>
    <ligand>
        <name>Mg(2+)</name>
        <dbReference type="ChEBI" id="CHEBI:18420"/>
    </ligand>
</feature>
<feature type="binding site" evidence="4">
    <location>
        <position position="138"/>
    </location>
    <ligand>
        <name>GTP</name>
        <dbReference type="ChEBI" id="CHEBI:37565"/>
    </ligand>
</feature>
<feature type="binding site" evidence="4">
    <location>
        <position position="142"/>
    </location>
    <ligand>
        <name>GTP</name>
        <dbReference type="ChEBI" id="CHEBI:37565"/>
    </ligand>
</feature>
<feature type="binding site" evidence="4">
    <location>
        <position position="143"/>
    </location>
    <ligand>
        <name>GTP</name>
        <dbReference type="ChEBI" id="CHEBI:37565"/>
    </ligand>
</feature>
<feature type="binding site" evidence="4">
    <location>
        <position position="144"/>
    </location>
    <ligand>
        <name>GTP</name>
        <dbReference type="ChEBI" id="CHEBI:37565"/>
    </ligand>
</feature>
<feature type="binding site" evidence="4">
    <location>
        <position position="204"/>
    </location>
    <ligand>
        <name>GTP</name>
        <dbReference type="ChEBI" id="CHEBI:37565"/>
    </ligand>
</feature>
<feature type="binding site" evidence="4">
    <location>
        <position position="226"/>
    </location>
    <ligand>
        <name>GTP</name>
        <dbReference type="ChEBI" id="CHEBI:37565"/>
    </ligand>
</feature>
<feature type="modified residue" description="Phosphoserine; by CDK1" evidence="7">
    <location>
        <position position="172"/>
    </location>
</feature>
<feature type="modified residue" description="Phosphoserine" evidence="15 16">
    <location>
        <position position="435"/>
    </location>
</feature>
<feature type="modified residue" description="5-glutamyl polyglutamate" evidence="5">
    <location>
        <position position="440"/>
    </location>
</feature>
<reference key="1">
    <citation type="journal article" date="2009" name="PLoS Biol.">
        <title>Lineage-specific biology revealed by a finished genome assembly of the mouse.</title>
        <authorList>
            <person name="Church D.M."/>
            <person name="Goodstadt L."/>
            <person name="Hillier L.W."/>
            <person name="Zody M.C."/>
            <person name="Goldstein S."/>
            <person name="She X."/>
            <person name="Bult C.J."/>
            <person name="Agarwala R."/>
            <person name="Cherry J.L."/>
            <person name="DiCuccio M."/>
            <person name="Hlavina W."/>
            <person name="Kapustin Y."/>
            <person name="Meric P."/>
            <person name="Maglott D."/>
            <person name="Birtle Z."/>
            <person name="Marques A.C."/>
            <person name="Graves T."/>
            <person name="Zhou S."/>
            <person name="Teague B."/>
            <person name="Potamousis K."/>
            <person name="Churas C."/>
            <person name="Place M."/>
            <person name="Herschleb J."/>
            <person name="Runnheim R."/>
            <person name="Forrest D."/>
            <person name="Amos-Landgraf J."/>
            <person name="Schwartz D.C."/>
            <person name="Cheng Z."/>
            <person name="Lindblad-Toh K."/>
            <person name="Eichler E.E."/>
            <person name="Ponting C.P."/>
        </authorList>
    </citation>
    <scope>NUCLEOTIDE SEQUENCE [LARGE SCALE GENOMIC DNA]</scope>
    <source>
        <strain>C57BL/6J</strain>
    </source>
</reference>
<reference key="2">
    <citation type="submission" date="2005-07" db="EMBL/GenBank/DDBJ databases">
        <authorList>
            <person name="Mural R.J."/>
            <person name="Adams M.D."/>
            <person name="Myers E.W."/>
            <person name="Smith H.O."/>
            <person name="Venter J.C."/>
        </authorList>
    </citation>
    <scope>NUCLEOTIDE SEQUENCE [LARGE SCALE GENOMIC DNA]</scope>
</reference>
<reference key="3">
    <citation type="journal article" date="2004" name="Genome Res.">
        <title>The status, quality, and expansion of the NIH full-length cDNA project: the Mammalian Gene Collection (MGC).</title>
        <authorList>
            <consortium name="The MGC Project Team"/>
        </authorList>
    </citation>
    <scope>NUCLEOTIDE SEQUENCE [LARGE SCALE MRNA]</scope>
    <source>
        <tissue>Brain</tissue>
    </source>
</reference>
<reference key="4">
    <citation type="journal article" date="2007" name="Proc. Natl. Acad. Sci. U.S.A.">
        <title>Large-scale phosphorylation analysis of mouse liver.</title>
        <authorList>
            <person name="Villen J."/>
            <person name="Beausoleil S.A."/>
            <person name="Gerber S.A."/>
            <person name="Gygi S.P."/>
        </authorList>
    </citation>
    <scope>PHOSPHORYLATION [LARGE SCALE ANALYSIS] AT SER-435</scope>
    <scope>IDENTIFICATION BY MASS SPECTROMETRY [LARGE SCALE ANALYSIS]</scope>
    <source>
        <tissue>Liver</tissue>
    </source>
</reference>
<reference key="5">
    <citation type="journal article" date="2008" name="J. Biol. Chem.">
        <title>RanBP10 is a cytoplasmic guanine nucleotide exchange factor that modulates noncentrosomal microtubules.</title>
        <authorList>
            <person name="Schulze H."/>
            <person name="Dose M."/>
            <person name="Korpal M."/>
            <person name="Meyer I."/>
            <person name="Italiano J.E. Jr."/>
            <person name="Shivdasani R.A."/>
        </authorList>
    </citation>
    <scope>INTERACTION WITH RANBP10</scope>
</reference>
<reference key="6">
    <citation type="journal article" date="2005" name="Science">
        <title>Tubulin polyglutamylase enzymes are members of the TTL domain protein family.</title>
        <authorList>
            <person name="Janke C."/>
            <person name="Rogowski K."/>
            <person name="Wloga D."/>
            <person name="Regnard C."/>
            <person name="Kajava A.V."/>
            <person name="Strub J.-M."/>
            <person name="Temurak N."/>
            <person name="van Dijk J."/>
            <person name="Boucher D."/>
            <person name="van Dorsselaer A."/>
            <person name="Suryavanshi S."/>
            <person name="Gaertig J."/>
            <person name="Edde B."/>
        </authorList>
    </citation>
    <scope>GLUTAMYLATION</scope>
</reference>
<reference key="7">
    <citation type="journal article" date="2009" name="Cell">
        <title>Evolutionary divergence of enzymatic mechanisms for posttranslational polyglycylation.</title>
        <authorList>
            <person name="Rogowski K."/>
            <person name="Juge F."/>
            <person name="van Dijk J."/>
            <person name="Wloga D."/>
            <person name="Strub J.-M."/>
            <person name="Levilliers N."/>
            <person name="Thomas D."/>
            <person name="Bre M.-H."/>
            <person name="Van Dorsselaer A."/>
            <person name="Gaertig J."/>
            <person name="Janke C."/>
        </authorList>
    </citation>
    <scope>GLYCYLATION</scope>
</reference>
<reference key="8">
    <citation type="journal article" date="2010" name="Cell">
        <title>A tissue-specific atlas of mouse protein phosphorylation and expression.</title>
        <authorList>
            <person name="Huttlin E.L."/>
            <person name="Jedrychowski M.P."/>
            <person name="Elias J.E."/>
            <person name="Goswami T."/>
            <person name="Rad R."/>
            <person name="Beausoleil S.A."/>
            <person name="Villen J."/>
            <person name="Haas W."/>
            <person name="Sowa M.E."/>
            <person name="Gygi S.P."/>
        </authorList>
    </citation>
    <scope>PHOSPHORYLATION [LARGE SCALE ANALYSIS] AT SER-435</scope>
    <scope>IDENTIFICATION BY MASS SPECTROMETRY [LARGE SCALE ANALYSIS]</scope>
    <source>
        <tissue>Brown adipose tissue</tissue>
        <tissue>Heart</tissue>
        <tissue>Kidney</tissue>
        <tissue>Liver</tissue>
        <tissue>Lung</tissue>
        <tissue>Spleen</tissue>
    </source>
</reference>
<reference key="9">
    <citation type="journal article" date="2013" name="J. Cell Biol.">
        <title>Tubulin glycylases and glutamylases have distinct functions in stabilization and motility of ependymal cilia.</title>
        <authorList>
            <person name="Bosch Grau M."/>
            <person name="Gonzalez Curto G."/>
            <person name="Rocha C."/>
            <person name="Magiera M.M."/>
            <person name="Marques Sousa P."/>
            <person name="Giordano T."/>
            <person name="Spassky N."/>
            <person name="Janke C."/>
        </authorList>
    </citation>
    <scope>GLYCYLATION</scope>
    <scope>GLUTAMYLATION</scope>
</reference>
<reference key="10">
    <citation type="journal article" date="2021" name="Science">
        <title>Tubulin glycylation controls axonemal dynein activity, flagellar beat, and male fertility.</title>
        <authorList>
            <person name="Gadadhar S."/>
            <person name="Alvarez Viar G."/>
            <person name="Hansen J.N."/>
            <person name="Gong A."/>
            <person name="Kostarev A."/>
            <person name="Ialy-Radio C."/>
            <person name="Leboucher S."/>
            <person name="Whitfield M."/>
            <person name="Ziyyat A."/>
            <person name="Toure A."/>
            <person name="Alvarez L."/>
            <person name="Pigino G."/>
            <person name="Janke C."/>
        </authorList>
    </citation>
    <scope>GLYCYLATION</scope>
</reference>
<accession>A2AQ07</accession>
<name>TBB1_MOUSE</name>
<evidence type="ECO:0000250" key="1"/>
<evidence type="ECO:0000250" key="2">
    <source>
        <dbReference type="UniProtKB" id="P07437"/>
    </source>
</evidence>
<evidence type="ECO:0000250" key="3">
    <source>
        <dbReference type="UniProtKB" id="P68363"/>
    </source>
</evidence>
<evidence type="ECO:0000250" key="4">
    <source>
        <dbReference type="UniProtKB" id="Q13509"/>
    </source>
</evidence>
<evidence type="ECO:0000250" key="5">
    <source>
        <dbReference type="UniProtKB" id="Q2T9S0"/>
    </source>
</evidence>
<evidence type="ECO:0000250" key="6">
    <source>
        <dbReference type="UniProtKB" id="Q71U36"/>
    </source>
</evidence>
<evidence type="ECO:0000250" key="7">
    <source>
        <dbReference type="UniProtKB" id="Q9H4B7"/>
    </source>
</evidence>
<evidence type="ECO:0000256" key="8">
    <source>
        <dbReference type="SAM" id="MobiDB-lite"/>
    </source>
</evidence>
<evidence type="ECO:0000269" key="9">
    <source>
    </source>
</evidence>
<evidence type="ECO:0000269" key="10">
    <source>
    </source>
</evidence>
<evidence type="ECO:0000269" key="11">
    <source>
    </source>
</evidence>
<evidence type="ECO:0000269" key="12">
    <source>
    </source>
</evidence>
<evidence type="ECO:0000269" key="13">
    <source>
    </source>
</evidence>
<evidence type="ECO:0000305" key="14"/>
<evidence type="ECO:0007744" key="15">
    <source>
    </source>
</evidence>
<evidence type="ECO:0007744" key="16">
    <source>
    </source>
</evidence>
<protein>
    <recommendedName>
        <fullName>Tubulin beta-1 chain</fullName>
    </recommendedName>
</protein>
<keyword id="KW-0963">Cytoplasm</keyword>
<keyword id="KW-0206">Cytoskeleton</keyword>
<keyword id="KW-0342">GTP-binding</keyword>
<keyword id="KW-1017">Isopeptide bond</keyword>
<keyword id="KW-0460">Magnesium</keyword>
<keyword id="KW-0479">Metal-binding</keyword>
<keyword id="KW-0493">Microtubule</keyword>
<keyword id="KW-0547">Nucleotide-binding</keyword>
<keyword id="KW-0597">Phosphoprotein</keyword>
<keyword id="KW-1185">Reference proteome</keyword>